<sequence length="87" mass="9623">MKPIVYMLLFCAFTVVILGHPNNHGALIPHHDKLPNGESCTRPGYSCSESNQCCTPVDGETFTYGCGRAWMEGSKICYICNRESSMC</sequence>
<organism>
    <name type="scientific">Trittame loki</name>
    <name type="common">Brush-footed trapdoor spider</name>
    <dbReference type="NCBI Taxonomy" id="1295018"/>
    <lineage>
        <taxon>Eukaryota</taxon>
        <taxon>Metazoa</taxon>
        <taxon>Ecdysozoa</taxon>
        <taxon>Arthropoda</taxon>
        <taxon>Chelicerata</taxon>
        <taxon>Arachnida</taxon>
        <taxon>Araneae</taxon>
        <taxon>Mygalomorphae</taxon>
        <taxon>Barychelidae</taxon>
        <taxon>Trittame</taxon>
    </lineage>
</organism>
<dbReference type="EMBL" id="GAQE01000045">
    <property type="protein sequence ID" value="JAB84509.1"/>
    <property type="molecule type" value="Transcribed_RNA"/>
</dbReference>
<dbReference type="SMR" id="W4VRV7"/>
<dbReference type="ArachnoServer" id="AS001696">
    <property type="toxin name" value="U18-barytoxin-Tl1b"/>
</dbReference>
<dbReference type="GO" id="GO:0005576">
    <property type="term" value="C:extracellular region"/>
    <property type="evidence" value="ECO:0007669"/>
    <property type="project" value="UniProtKB-SubCell"/>
</dbReference>
<dbReference type="GO" id="GO:0099106">
    <property type="term" value="F:ion channel regulator activity"/>
    <property type="evidence" value="ECO:0007669"/>
    <property type="project" value="UniProtKB-KW"/>
</dbReference>
<dbReference type="GO" id="GO:0090729">
    <property type="term" value="F:toxin activity"/>
    <property type="evidence" value="ECO:0007669"/>
    <property type="project" value="UniProtKB-KW"/>
</dbReference>
<dbReference type="InterPro" id="IPR035311">
    <property type="entry name" value="Cys_Knot_tox"/>
</dbReference>
<dbReference type="Pfam" id="PF17486">
    <property type="entry name" value="Cys_Knot_tox"/>
    <property type="match status" value="1"/>
</dbReference>
<comment type="function">
    <text evidence="4">Probable neurotoxin with ion channel impairing activity.</text>
</comment>
<comment type="subcellular location">
    <subcellularLocation>
        <location evidence="5">Secreted</location>
    </subcellularLocation>
</comment>
<comment type="tissue specificity">
    <text evidence="5">Expressed by the venom gland.</text>
</comment>
<comment type="domain">
    <text evidence="1">The presence of a 'disulfide through disulfide knot' structurally defines this protein as a knottin.</text>
</comment>
<comment type="similarity">
    <text evidence="4">Belongs to the neurotoxin 27 (Jztx-72) family. ICK-41 subfamily.</text>
</comment>
<protein>
    <recommendedName>
        <fullName evidence="3">Toxin ICK-42</fullName>
    </recommendedName>
</protein>
<evidence type="ECO:0000250" key="1">
    <source>
        <dbReference type="UniProtKB" id="A0A1D0C027"/>
    </source>
</evidence>
<evidence type="ECO:0000255" key="2"/>
<evidence type="ECO:0000303" key="3">
    <source>
    </source>
</evidence>
<evidence type="ECO:0000305" key="4"/>
<evidence type="ECO:0000305" key="5">
    <source>
    </source>
</evidence>
<accession>W4VRV7</accession>
<proteinExistence type="inferred from homology"/>
<keyword id="KW-1015">Disulfide bond</keyword>
<keyword id="KW-0872">Ion channel impairing toxin</keyword>
<keyword id="KW-0960">Knottin</keyword>
<keyword id="KW-0528">Neurotoxin</keyword>
<keyword id="KW-0964">Secreted</keyword>
<keyword id="KW-0732">Signal</keyword>
<keyword id="KW-0800">Toxin</keyword>
<name>ICK42_TRILK</name>
<reference key="1">
    <citation type="journal article" date="2013" name="Toxins">
        <title>A proteomics and transcriptomics investigation of the venom from the barychelid spider Trittame loki (brush-foot trapdoor).</title>
        <authorList>
            <person name="Undheim E.A."/>
            <person name="Sunagar K."/>
            <person name="Herzig V."/>
            <person name="Kely L."/>
            <person name="Low D.H."/>
            <person name="Jackson T.N."/>
            <person name="Jones A."/>
            <person name="Kurniawan N."/>
            <person name="King G.F."/>
            <person name="Ali S.A."/>
            <person name="Antunes A."/>
            <person name="Ruder T."/>
            <person name="Fry B.G."/>
        </authorList>
    </citation>
    <scope>NUCLEOTIDE SEQUENCE [MRNA]</scope>
    <source>
        <tissue>Venom gland</tissue>
    </source>
</reference>
<feature type="signal peptide" evidence="2">
    <location>
        <begin position="1"/>
        <end position="19"/>
    </location>
</feature>
<feature type="chain" id="PRO_0000429249" description="Toxin ICK-42">
    <location>
        <begin position="20"/>
        <end position="87"/>
    </location>
</feature>
<feature type="disulfide bond" evidence="1">
    <location>
        <begin position="40"/>
        <end position="77"/>
    </location>
</feature>
<feature type="disulfide bond" evidence="1">
    <location>
        <begin position="40"/>
        <end position="54"/>
    </location>
</feature>
<feature type="disulfide bond" evidence="1">
    <location>
        <begin position="53"/>
        <end position="66"/>
    </location>
</feature>
<feature type="disulfide bond" evidence="1">
    <location>
        <begin position="80"/>
        <end position="87"/>
    </location>
</feature>